<name>T2R40_PONPY</name>
<accession>Q645U5</accession>
<feature type="chain" id="PRO_0000082292" description="Taste receptor type 2 member 40">
    <location>
        <begin position="1"/>
        <end position="323"/>
    </location>
</feature>
<feature type="topological domain" description="Extracellular" evidence="2">
    <location>
        <begin position="1"/>
        <end position="14"/>
    </location>
</feature>
<feature type="transmembrane region" description="Helical; Name=1" evidence="2">
    <location>
        <begin position="15"/>
        <end position="35"/>
    </location>
</feature>
<feature type="topological domain" description="Cytoplasmic" evidence="2">
    <location>
        <begin position="36"/>
        <end position="58"/>
    </location>
</feature>
<feature type="transmembrane region" description="Helical; Name=2" evidence="2">
    <location>
        <begin position="59"/>
        <end position="79"/>
    </location>
</feature>
<feature type="topological domain" description="Extracellular" evidence="2">
    <location>
        <begin position="80"/>
        <end position="100"/>
    </location>
</feature>
<feature type="transmembrane region" description="Helical; Name=3" evidence="2">
    <location>
        <begin position="101"/>
        <end position="121"/>
    </location>
</feature>
<feature type="topological domain" description="Cytoplasmic" evidence="2">
    <location>
        <begin position="122"/>
        <end position="140"/>
    </location>
</feature>
<feature type="transmembrane region" description="Helical; Name=4" evidence="2">
    <location>
        <begin position="141"/>
        <end position="162"/>
    </location>
</feature>
<feature type="topological domain" description="Extracellular" evidence="2">
    <location>
        <begin position="163"/>
        <end position="190"/>
    </location>
</feature>
<feature type="transmembrane region" description="Helical; Name=5" evidence="2">
    <location>
        <begin position="191"/>
        <end position="211"/>
    </location>
</feature>
<feature type="topological domain" description="Cytoplasmic" evidence="2">
    <location>
        <begin position="212"/>
        <end position="247"/>
    </location>
</feature>
<feature type="transmembrane region" description="Helical; Name=6" evidence="2">
    <location>
        <begin position="248"/>
        <end position="268"/>
    </location>
</feature>
<feature type="topological domain" description="Extracellular" evidence="2">
    <location>
        <begin position="269"/>
        <end position="276"/>
    </location>
</feature>
<feature type="transmembrane region" description="Helical; Name=7" evidence="2">
    <location>
        <begin position="277"/>
        <end position="297"/>
    </location>
</feature>
<feature type="topological domain" description="Cytoplasmic" evidence="2">
    <location>
        <begin position="298"/>
        <end position="323"/>
    </location>
</feature>
<feature type="glycosylation site" description="N-linked (GlcNAc...) asparagine" evidence="2">
    <location>
        <position position="170"/>
    </location>
</feature>
<feature type="glycosylation site" description="N-linked (GlcNAc...) asparagine" evidence="2">
    <location>
        <position position="179"/>
    </location>
</feature>
<comment type="function">
    <text evidence="1">Gustducin-coupled receptor implicated in the perception of bitter compounds in the oral cavity and the gastrointestinal tract. Signals through PLCB2 and the calcium-regulated cation channel TRPM5 (By similarity).</text>
</comment>
<comment type="subcellular location">
    <subcellularLocation>
        <location>Membrane</location>
        <topology>Multi-pass membrane protein</topology>
    </subcellularLocation>
</comment>
<comment type="miscellaneous">
    <text>Several bitter taste receptors are expressed in a single taste receptor cell.</text>
</comment>
<comment type="similarity">
    <text evidence="3">Belongs to the G-protein coupled receptor T2R family.</text>
</comment>
<proteinExistence type="inferred from homology"/>
<reference key="1">
    <citation type="journal article" date="2005" name="Mol. Biol. Evol.">
        <title>Evolution of bitter taste receptors in humans and apes.</title>
        <authorList>
            <person name="Fischer A."/>
            <person name="Gilad Y."/>
            <person name="Man O."/>
            <person name="Paeaebo S."/>
        </authorList>
    </citation>
    <scope>NUCLEOTIDE SEQUENCE [GENOMIC DNA]</scope>
</reference>
<protein>
    <recommendedName>
        <fullName>Taste receptor type 2 member 40</fullName>
        <shortName>T2R40</shortName>
    </recommendedName>
</protein>
<organism>
    <name type="scientific">Pongo pygmaeus</name>
    <name type="common">Bornean orangutan</name>
    <dbReference type="NCBI Taxonomy" id="9600"/>
    <lineage>
        <taxon>Eukaryota</taxon>
        <taxon>Metazoa</taxon>
        <taxon>Chordata</taxon>
        <taxon>Craniata</taxon>
        <taxon>Vertebrata</taxon>
        <taxon>Euteleostomi</taxon>
        <taxon>Mammalia</taxon>
        <taxon>Eutheria</taxon>
        <taxon>Euarchontoglires</taxon>
        <taxon>Primates</taxon>
        <taxon>Haplorrhini</taxon>
        <taxon>Catarrhini</taxon>
        <taxon>Hominidae</taxon>
        <taxon>Pongo</taxon>
    </lineage>
</organism>
<dbReference type="EMBL" id="AY724988">
    <property type="protein sequence ID" value="AAU21174.1"/>
    <property type="molecule type" value="Genomic_DNA"/>
</dbReference>
<dbReference type="RefSeq" id="XP_054349652.1">
    <property type="nucleotide sequence ID" value="XM_054493677.1"/>
</dbReference>
<dbReference type="SMR" id="Q645U5"/>
<dbReference type="GlyCosmos" id="Q645U5">
    <property type="glycosylation" value="2 sites, No reported glycans"/>
</dbReference>
<dbReference type="GeneID" id="129039976"/>
<dbReference type="GO" id="GO:0005886">
    <property type="term" value="C:plasma membrane"/>
    <property type="evidence" value="ECO:0007669"/>
    <property type="project" value="UniProtKB-ARBA"/>
</dbReference>
<dbReference type="GO" id="GO:0033038">
    <property type="term" value="F:bitter taste receptor activity"/>
    <property type="evidence" value="ECO:0007669"/>
    <property type="project" value="InterPro"/>
</dbReference>
<dbReference type="GO" id="GO:0004930">
    <property type="term" value="F:G protein-coupled receptor activity"/>
    <property type="evidence" value="ECO:0007669"/>
    <property type="project" value="UniProtKB-KW"/>
</dbReference>
<dbReference type="FunFam" id="1.20.1070.10:FF:000055">
    <property type="entry name" value="Taste receptor type 2"/>
    <property type="match status" value="1"/>
</dbReference>
<dbReference type="Gene3D" id="1.20.1070.10">
    <property type="entry name" value="Rhodopsin 7-helix transmembrane proteins"/>
    <property type="match status" value="1"/>
</dbReference>
<dbReference type="InterPro" id="IPR007960">
    <property type="entry name" value="TAS2R"/>
</dbReference>
<dbReference type="PANTHER" id="PTHR11394">
    <property type="entry name" value="TASTE RECEPTOR TYPE 2"/>
    <property type="match status" value="1"/>
</dbReference>
<dbReference type="PANTHER" id="PTHR11394:SF47">
    <property type="entry name" value="TASTE RECEPTOR TYPE 2 MEMBER 40"/>
    <property type="match status" value="1"/>
</dbReference>
<dbReference type="Pfam" id="PF05296">
    <property type="entry name" value="TAS2R"/>
    <property type="match status" value="1"/>
</dbReference>
<dbReference type="SUPFAM" id="SSF81321">
    <property type="entry name" value="Family A G protein-coupled receptor-like"/>
    <property type="match status" value="1"/>
</dbReference>
<evidence type="ECO:0000250" key="1"/>
<evidence type="ECO:0000255" key="2"/>
<evidence type="ECO:0000305" key="3"/>
<sequence>MATVNTDATDKDISTFKVTFTLVVSGIECITGILGSGFITAIYGAEWARGKTLPTGDHIMLMLSFSRLLLQIWMMLENIFSLLFRIVYNQNTVYILFKVITVFLNHSNLWFAAWLKVFYCLRIANFNHPLFFLMKRKIIVLMPWLLRLSVLVSLSFSFPLSRHVFNVYVNSSIPISSSNSTEKKYFSETNMVNLVFFYNMGIFVPLIMFILAATLLILSLKRHTLHMGSNATGSRDPSMKAHIGAIKATSYFLILYIFNAIALFLSMSNIFDTYSSWNILCKIIMAAYPAGHSVQLILGNPGLRRAWKRFQHQVPLYLKGQTL</sequence>
<keyword id="KW-0297">G-protein coupled receptor</keyword>
<keyword id="KW-0325">Glycoprotein</keyword>
<keyword id="KW-0472">Membrane</keyword>
<keyword id="KW-0675">Receptor</keyword>
<keyword id="KW-0716">Sensory transduction</keyword>
<keyword id="KW-0919">Taste</keyword>
<keyword id="KW-0807">Transducer</keyword>
<keyword id="KW-0812">Transmembrane</keyword>
<keyword id="KW-1133">Transmembrane helix</keyword>
<gene>
    <name type="primary">TAS2R40</name>
</gene>